<name>FDHD_ECOSE</name>
<keyword id="KW-0963">Cytoplasm</keyword>
<keyword id="KW-0501">Molybdenum cofactor biosynthesis</keyword>
<feature type="chain" id="PRO_1000098783" description="Sulfur carrier protein FdhD">
    <location>
        <begin position="1"/>
        <end position="277"/>
    </location>
</feature>
<feature type="active site" description="Cysteine persulfide intermediate" evidence="1">
    <location>
        <position position="121"/>
    </location>
</feature>
<feature type="binding site" evidence="1">
    <location>
        <begin position="260"/>
        <end position="265"/>
    </location>
    <ligand>
        <name>Mo-bis(molybdopterin guanine dinucleotide)</name>
        <dbReference type="ChEBI" id="CHEBI:60539"/>
    </ligand>
</feature>
<reference key="1">
    <citation type="journal article" date="2008" name="DNA Res.">
        <title>Complete genome sequence and comparative analysis of the wild-type commensal Escherichia coli strain SE11 isolated from a healthy adult.</title>
        <authorList>
            <person name="Oshima K."/>
            <person name="Toh H."/>
            <person name="Ogura Y."/>
            <person name="Sasamoto H."/>
            <person name="Morita H."/>
            <person name="Park S.-H."/>
            <person name="Ooka T."/>
            <person name="Iyoda S."/>
            <person name="Taylor T.D."/>
            <person name="Hayashi T."/>
            <person name="Itoh K."/>
            <person name="Hattori M."/>
        </authorList>
    </citation>
    <scope>NUCLEOTIDE SEQUENCE [LARGE SCALE GENOMIC DNA]</scope>
    <source>
        <strain>SE11</strain>
    </source>
</reference>
<organism>
    <name type="scientific">Escherichia coli (strain SE11)</name>
    <dbReference type="NCBI Taxonomy" id="409438"/>
    <lineage>
        <taxon>Bacteria</taxon>
        <taxon>Pseudomonadati</taxon>
        <taxon>Pseudomonadota</taxon>
        <taxon>Gammaproteobacteria</taxon>
        <taxon>Enterobacterales</taxon>
        <taxon>Enterobacteriaceae</taxon>
        <taxon>Escherichia</taxon>
    </lineage>
</organism>
<sequence length="277" mass="30532">MKKTQQKEIENVTNITGVRQIELWRRDDLQHPRLDEVAEEVPVALVYNGISHVVMMASPKDLEYFALGFSLSEGIIESPRDIFGMDVVPSCNGLEVQIELSSRRFMGLKERRRALAGRTGCGVCGVEQLNDIGKPVQPLPFTQTFDLNKLDDALRHLNDFQPVGQLTGCTHAAAWMLPSGELVGGHEDVGRHVALDKLLGRRSQEGESWQQGAVLVSSRASYEMVQKSAMCGVEILFAVSAATTLAVEVAERCNLTLVGFCKPGRATVYTHPQRLSN</sequence>
<protein>
    <recommendedName>
        <fullName evidence="1">Sulfur carrier protein FdhD</fullName>
    </recommendedName>
</protein>
<dbReference type="EMBL" id="AP009240">
    <property type="protein sequence ID" value="BAG79706.1"/>
    <property type="molecule type" value="Genomic_DNA"/>
</dbReference>
<dbReference type="RefSeq" id="WP_000753589.1">
    <property type="nucleotide sequence ID" value="NC_011415.1"/>
</dbReference>
<dbReference type="SMR" id="B6I4N6"/>
<dbReference type="GeneID" id="75174135"/>
<dbReference type="KEGG" id="ecy:ECSE_4182"/>
<dbReference type="HOGENOM" id="CLU_056887_2_0_6"/>
<dbReference type="Proteomes" id="UP000008199">
    <property type="component" value="Chromosome"/>
</dbReference>
<dbReference type="GO" id="GO:0005737">
    <property type="term" value="C:cytoplasm"/>
    <property type="evidence" value="ECO:0007669"/>
    <property type="project" value="UniProtKB-SubCell"/>
</dbReference>
<dbReference type="GO" id="GO:0097163">
    <property type="term" value="F:sulfur carrier activity"/>
    <property type="evidence" value="ECO:0007669"/>
    <property type="project" value="UniProtKB-UniRule"/>
</dbReference>
<dbReference type="GO" id="GO:0016783">
    <property type="term" value="F:sulfurtransferase activity"/>
    <property type="evidence" value="ECO:0007669"/>
    <property type="project" value="InterPro"/>
</dbReference>
<dbReference type="GO" id="GO:0006777">
    <property type="term" value="P:Mo-molybdopterin cofactor biosynthetic process"/>
    <property type="evidence" value="ECO:0007669"/>
    <property type="project" value="UniProtKB-UniRule"/>
</dbReference>
<dbReference type="FunFam" id="3.10.20.10:FF:000003">
    <property type="entry name" value="Sulfur carrier protein FdhD"/>
    <property type="match status" value="1"/>
</dbReference>
<dbReference type="FunFam" id="3.40.140.10:FF:000027">
    <property type="entry name" value="Sulfur carrier protein FdhD"/>
    <property type="match status" value="1"/>
</dbReference>
<dbReference type="Gene3D" id="3.10.20.10">
    <property type="match status" value="1"/>
</dbReference>
<dbReference type="Gene3D" id="3.40.140.10">
    <property type="entry name" value="Cytidine Deaminase, domain 2"/>
    <property type="match status" value="1"/>
</dbReference>
<dbReference type="HAMAP" id="MF_00187">
    <property type="entry name" value="FdhD"/>
    <property type="match status" value="1"/>
</dbReference>
<dbReference type="InterPro" id="IPR016193">
    <property type="entry name" value="Cytidine_deaminase-like"/>
</dbReference>
<dbReference type="InterPro" id="IPR003786">
    <property type="entry name" value="FdhD"/>
</dbReference>
<dbReference type="NCBIfam" id="TIGR00129">
    <property type="entry name" value="fdhD_narQ"/>
    <property type="match status" value="1"/>
</dbReference>
<dbReference type="PANTHER" id="PTHR30592">
    <property type="entry name" value="FORMATE DEHYDROGENASE"/>
    <property type="match status" value="1"/>
</dbReference>
<dbReference type="PANTHER" id="PTHR30592:SF1">
    <property type="entry name" value="SULFUR CARRIER PROTEIN FDHD"/>
    <property type="match status" value="1"/>
</dbReference>
<dbReference type="Pfam" id="PF02634">
    <property type="entry name" value="FdhD-NarQ"/>
    <property type="match status" value="1"/>
</dbReference>
<dbReference type="PIRSF" id="PIRSF015626">
    <property type="entry name" value="FdhD"/>
    <property type="match status" value="1"/>
</dbReference>
<dbReference type="SUPFAM" id="SSF53927">
    <property type="entry name" value="Cytidine deaminase-like"/>
    <property type="match status" value="1"/>
</dbReference>
<accession>B6I4N6</accession>
<proteinExistence type="inferred from homology"/>
<evidence type="ECO:0000255" key="1">
    <source>
        <dbReference type="HAMAP-Rule" id="MF_00187"/>
    </source>
</evidence>
<comment type="function">
    <text evidence="1">Required for formate dehydrogenase (FDH) activity. Acts as a sulfur carrier protein that transfers sulfur from IscS to the molybdenum cofactor prior to its insertion into FDH.</text>
</comment>
<comment type="subcellular location">
    <subcellularLocation>
        <location evidence="1">Cytoplasm</location>
    </subcellularLocation>
</comment>
<comment type="similarity">
    <text evidence="1">Belongs to the FdhD family.</text>
</comment>
<gene>
    <name evidence="1" type="primary">fdhD</name>
    <name type="ordered locus">ECSE_4182</name>
</gene>